<feature type="chain" id="PRO_0000096211" description="tRNA threonylcarbamoyladenosine biosynthesis protein TsaE">
    <location>
        <begin position="1"/>
        <end position="158"/>
    </location>
</feature>
<feature type="binding site" evidence="1">
    <location>
        <begin position="38"/>
        <end position="43"/>
    </location>
    <ligand>
        <name>ATP</name>
        <dbReference type="ChEBI" id="CHEBI:30616"/>
    </ligand>
</feature>
<feature type="binding site" evidence="1">
    <location>
        <position position="42"/>
    </location>
    <ligand>
        <name>Mg(2+)</name>
        <dbReference type="ChEBI" id="CHEBI:18420"/>
    </ligand>
</feature>
<feature type="binding site" evidence="1">
    <location>
        <position position="106"/>
    </location>
    <ligand>
        <name>Mg(2+)</name>
        <dbReference type="ChEBI" id="CHEBI:18420"/>
    </ligand>
</feature>
<feature type="binding site" evidence="1">
    <location>
        <position position="130"/>
    </location>
    <ligand>
        <name>ATP</name>
        <dbReference type="ChEBI" id="CHEBI:30616"/>
    </ligand>
</feature>
<feature type="mutagenesis site" description="Severely reduces ATPase activity and growth rate." evidence="2">
    <original>K</original>
    <variation>A</variation>
    <location>
        <position position="41"/>
    </location>
</feature>
<feature type="strand" evidence="6">
    <location>
        <begin position="2"/>
        <end position="10"/>
    </location>
</feature>
<feature type="helix" evidence="6">
    <location>
        <begin position="11"/>
        <end position="23"/>
    </location>
</feature>
<feature type="strand" evidence="6">
    <location>
        <begin position="30"/>
        <end position="34"/>
    </location>
</feature>
<feature type="helix" evidence="6">
    <location>
        <begin position="41"/>
        <end position="51"/>
    </location>
</feature>
<feature type="turn" evidence="7">
    <location>
        <begin position="62"/>
        <end position="64"/>
    </location>
</feature>
<feature type="strand" evidence="6">
    <location>
        <begin position="65"/>
        <end position="69"/>
    </location>
</feature>
<feature type="strand" evidence="6">
    <location>
        <begin position="71"/>
        <end position="74"/>
    </location>
</feature>
<feature type="strand" evidence="6">
    <location>
        <begin position="76"/>
        <end position="80"/>
    </location>
</feature>
<feature type="helix" evidence="7">
    <location>
        <begin position="84"/>
        <end position="86"/>
    </location>
</feature>
<feature type="helix" evidence="6">
    <location>
        <begin position="94"/>
        <end position="97"/>
    </location>
</feature>
<feature type="strand" evidence="6">
    <location>
        <begin position="99"/>
        <end position="106"/>
    </location>
</feature>
<feature type="helix" evidence="6">
    <location>
        <begin position="108"/>
        <end position="114"/>
    </location>
</feature>
<feature type="strand" evidence="6">
    <location>
        <begin position="119"/>
        <end position="127"/>
    </location>
</feature>
<feature type="turn" evidence="6">
    <location>
        <begin position="128"/>
        <end position="130"/>
    </location>
</feature>
<feature type="strand" evidence="6">
    <location>
        <begin position="131"/>
        <end position="140"/>
    </location>
</feature>
<feature type="helix" evidence="6">
    <location>
        <begin position="141"/>
        <end position="152"/>
    </location>
</feature>
<protein>
    <recommendedName>
        <fullName>tRNA threonylcarbamoyladenosine biosynthesis protein TsaE</fullName>
    </recommendedName>
    <alternativeName>
        <fullName>t(6)A37 threonylcarbamoyladenosine biosynthesis protein TsaE</fullName>
    </alternativeName>
</protein>
<comment type="function">
    <text evidence="2 3">Required for the formation of a threonylcarbamoyl group on adenosine at position 37 (t(6)A37) in tRNAs that read codons beginning with adenine. Is involved in the transfer of the threonylcarbamoyl moiety of threonylcarbamoyl-AMP (TC-AMP) to the N6 group of A37, together with TsaD and TsaB; this reaction does not require ATP in vitro. TsaE seems to play an indirect role in the t(6)A biosynthesis pathway, possibly in regulating the core enzymatic function of TsaD. Displays ATPase activity in vitro, which is modulated by the oligomeric status of the protein.</text>
</comment>
<comment type="biophysicochemical properties">
    <kinetics>
        <KM evidence="2">62.1 uM for ATP</KM>
        <Vmax evidence="2">10.5 nmol/min/mg enzyme</Vmax>
        <text>Values are given for the monomeric form. The rate of ATP hydrolysis is about three times higher for the monomeric form as compared to the homooligomeric forms.</text>
    </kinetics>
</comment>
<comment type="subunit">
    <text evidence="2">Monomer, homodimer or homotetramer; in equilibrium. Low salt concentration favors oligomerization, while high salt concentration favors the monomeric form.</text>
</comment>
<comment type="subcellular location">
    <subcellularLocation>
        <location evidence="2">Cytoplasm</location>
    </subcellularLocation>
    <text>Localized predominantly at the cell poles and at the periphery of the bacterium.</text>
</comment>
<comment type="induction">
    <text evidence="2">Expressed at all stages of growth.</text>
</comment>
<comment type="disruption phenotype">
    <text evidence="2">Cells lacking this gene exhibit significantly reduced growth in rich and minimal medium.</text>
</comment>
<comment type="miscellaneous">
    <text evidence="5">The four proteins YwlC, TsaD, TsaB and TsaE are necessary and sufficient for tRNA(NNU) t(6)A37 threonylcarbamoyladenosine biosynthesis in vitro in B.subtilis.</text>
</comment>
<comment type="similarity">
    <text evidence="4">Belongs to the TsaE family.</text>
</comment>
<comment type="caution">
    <text evidence="4">The well-known t(6)A modification appears to be a hydrolyzed artifact of natural cyclic t(6)A (ct(6)A) that occurs during the preparation and handling of tRNA in B.subtilis and many other species (PubMed:23242255). In these species, the t(6)A modification is processed further by dehydration into ct(6)A, a reaction catalyzed by TcdA.</text>
</comment>
<reference key="1">
    <citation type="journal article" date="1997" name="Microbiology">
        <title>Nucleotide sequence and analysis of the phoB-rrnE-groESL region of the Bacillus subtilis chromosome.</title>
        <authorList>
            <person name="Sadaie Y."/>
            <person name="Yata K."/>
            <person name="Fujita M."/>
            <person name="Sagai H."/>
            <person name="Itaya M."/>
            <person name="Kasahara Y."/>
            <person name="Ogasawara N."/>
        </authorList>
    </citation>
    <scope>NUCLEOTIDE SEQUENCE [GENOMIC DNA]</scope>
    <source>
        <strain>168 / JH642</strain>
    </source>
</reference>
<reference key="2">
    <citation type="journal article" date="1997" name="Nature">
        <title>The complete genome sequence of the Gram-positive bacterium Bacillus subtilis.</title>
        <authorList>
            <person name="Kunst F."/>
            <person name="Ogasawara N."/>
            <person name="Moszer I."/>
            <person name="Albertini A.M."/>
            <person name="Alloni G."/>
            <person name="Azevedo V."/>
            <person name="Bertero M.G."/>
            <person name="Bessieres P."/>
            <person name="Bolotin A."/>
            <person name="Borchert S."/>
            <person name="Borriss R."/>
            <person name="Boursier L."/>
            <person name="Brans A."/>
            <person name="Braun M."/>
            <person name="Brignell S.C."/>
            <person name="Bron S."/>
            <person name="Brouillet S."/>
            <person name="Bruschi C.V."/>
            <person name="Caldwell B."/>
            <person name="Capuano V."/>
            <person name="Carter N.M."/>
            <person name="Choi S.-K."/>
            <person name="Codani J.-J."/>
            <person name="Connerton I.F."/>
            <person name="Cummings N.J."/>
            <person name="Daniel R.A."/>
            <person name="Denizot F."/>
            <person name="Devine K.M."/>
            <person name="Duesterhoeft A."/>
            <person name="Ehrlich S.D."/>
            <person name="Emmerson P.T."/>
            <person name="Entian K.-D."/>
            <person name="Errington J."/>
            <person name="Fabret C."/>
            <person name="Ferrari E."/>
            <person name="Foulger D."/>
            <person name="Fritz C."/>
            <person name="Fujita M."/>
            <person name="Fujita Y."/>
            <person name="Fuma S."/>
            <person name="Galizzi A."/>
            <person name="Galleron N."/>
            <person name="Ghim S.-Y."/>
            <person name="Glaser P."/>
            <person name="Goffeau A."/>
            <person name="Golightly E.J."/>
            <person name="Grandi G."/>
            <person name="Guiseppi G."/>
            <person name="Guy B.J."/>
            <person name="Haga K."/>
            <person name="Haiech J."/>
            <person name="Harwood C.R."/>
            <person name="Henaut A."/>
            <person name="Hilbert H."/>
            <person name="Holsappel S."/>
            <person name="Hosono S."/>
            <person name="Hullo M.-F."/>
            <person name="Itaya M."/>
            <person name="Jones L.-M."/>
            <person name="Joris B."/>
            <person name="Karamata D."/>
            <person name="Kasahara Y."/>
            <person name="Klaerr-Blanchard M."/>
            <person name="Klein C."/>
            <person name="Kobayashi Y."/>
            <person name="Koetter P."/>
            <person name="Koningstein G."/>
            <person name="Krogh S."/>
            <person name="Kumano M."/>
            <person name="Kurita K."/>
            <person name="Lapidus A."/>
            <person name="Lardinois S."/>
            <person name="Lauber J."/>
            <person name="Lazarevic V."/>
            <person name="Lee S.-M."/>
            <person name="Levine A."/>
            <person name="Liu H."/>
            <person name="Masuda S."/>
            <person name="Mauel C."/>
            <person name="Medigue C."/>
            <person name="Medina N."/>
            <person name="Mellado R.P."/>
            <person name="Mizuno M."/>
            <person name="Moestl D."/>
            <person name="Nakai S."/>
            <person name="Noback M."/>
            <person name="Noone D."/>
            <person name="O'Reilly M."/>
            <person name="Ogawa K."/>
            <person name="Ogiwara A."/>
            <person name="Oudega B."/>
            <person name="Park S.-H."/>
            <person name="Parro V."/>
            <person name="Pohl T.M."/>
            <person name="Portetelle D."/>
            <person name="Porwollik S."/>
            <person name="Prescott A.M."/>
            <person name="Presecan E."/>
            <person name="Pujic P."/>
            <person name="Purnelle B."/>
            <person name="Rapoport G."/>
            <person name="Rey M."/>
            <person name="Reynolds S."/>
            <person name="Rieger M."/>
            <person name="Rivolta C."/>
            <person name="Rocha E."/>
            <person name="Roche B."/>
            <person name="Rose M."/>
            <person name="Sadaie Y."/>
            <person name="Sato T."/>
            <person name="Scanlan E."/>
            <person name="Schleich S."/>
            <person name="Schroeter R."/>
            <person name="Scoffone F."/>
            <person name="Sekiguchi J."/>
            <person name="Sekowska A."/>
            <person name="Seror S.J."/>
            <person name="Serror P."/>
            <person name="Shin B.-S."/>
            <person name="Soldo B."/>
            <person name="Sorokin A."/>
            <person name="Tacconi E."/>
            <person name="Takagi T."/>
            <person name="Takahashi H."/>
            <person name="Takemaru K."/>
            <person name="Takeuchi M."/>
            <person name="Tamakoshi A."/>
            <person name="Tanaka T."/>
            <person name="Terpstra P."/>
            <person name="Tognoni A."/>
            <person name="Tosato V."/>
            <person name="Uchiyama S."/>
            <person name="Vandenbol M."/>
            <person name="Vannier F."/>
            <person name="Vassarotti A."/>
            <person name="Viari A."/>
            <person name="Wambutt R."/>
            <person name="Wedler E."/>
            <person name="Wedler H."/>
            <person name="Weitzenegger T."/>
            <person name="Winters P."/>
            <person name="Wipat A."/>
            <person name="Yamamoto H."/>
            <person name="Yamane K."/>
            <person name="Yasumoto K."/>
            <person name="Yata K."/>
            <person name="Yoshida K."/>
            <person name="Yoshikawa H.-F."/>
            <person name="Zumstein E."/>
            <person name="Yoshikawa H."/>
            <person name="Danchin A."/>
        </authorList>
    </citation>
    <scope>NUCLEOTIDE SEQUENCE [LARGE SCALE GENOMIC DNA]</scope>
    <source>
        <strain>168</strain>
    </source>
</reference>
<reference key="3">
    <citation type="journal article" date="2009" name="Microbiology">
        <title>The ATPase activity of an 'essential' Bacillus subtilis enzyme, ydiB, is required for its cellular function and is modulated by oligomerization.</title>
        <authorList>
            <person name="Karst J.C."/>
            <person name="Foucher A.-E."/>
            <person name="Campbell T.L."/>
            <person name="Di Guilmi A.-M."/>
            <person name="Stroebel D."/>
            <person name="Mangat C.S."/>
            <person name="Brown E.D."/>
            <person name="Jault J.-M."/>
        </authorList>
    </citation>
    <scope>FUNCTION</scope>
    <scope>ATPASE ACTIVITY</scope>
    <scope>KINETIC PARAMETERS</scope>
    <scope>SUBUNIT</scope>
    <scope>SUBCELLULAR LOCATION</scope>
    <scope>INDUCTION</scope>
    <scope>DISRUPTION PHENOTYPE</scope>
    <scope>MUTAGENESIS OF LYS-41</scope>
    <source>
        <strain>168</strain>
    </source>
</reference>
<reference key="4">
    <citation type="journal article" date="2012" name="Biochemistry">
        <title>Mechanism of N6-threonylcarbamoyladenosine (t(6)A) biosynthesis: isolation and characterization of the intermediate threonylcarbamoyl-AMP.</title>
        <authorList>
            <person name="Lauhon C.T."/>
        </authorList>
    </citation>
    <scope>FUNCTION</scope>
    <source>
        <strain>168</strain>
    </source>
</reference>
<proteinExistence type="evidence at protein level"/>
<gene>
    <name type="primary">tsaE</name>
    <name type="synonym">ydiB</name>
    <name type="ordered locus">BSU05910</name>
</gene>
<sequence length="158" mass="17906">MKQLKWRTVNPEETKAIAKLTAAFAKPGDVLTLEGDLGAGKTTFTKGFAEGLGITRIVNSPTFTIIKEYNDGVLPLYHMDVYRMEDESEDLGLDEYFHGQGVCLVEWAHLIEEQLPQERLQIVIKRAGDDEREITFTAVGNRYEMLCEELSRHDNISN</sequence>
<name>TSAE_BACSU</name>
<organism>
    <name type="scientific">Bacillus subtilis (strain 168)</name>
    <dbReference type="NCBI Taxonomy" id="224308"/>
    <lineage>
        <taxon>Bacteria</taxon>
        <taxon>Bacillati</taxon>
        <taxon>Bacillota</taxon>
        <taxon>Bacilli</taxon>
        <taxon>Bacillales</taxon>
        <taxon>Bacillaceae</taxon>
        <taxon>Bacillus</taxon>
    </lineage>
</organism>
<keyword id="KW-0002">3D-structure</keyword>
<keyword id="KW-0067">ATP-binding</keyword>
<keyword id="KW-0963">Cytoplasm</keyword>
<keyword id="KW-0460">Magnesium</keyword>
<keyword id="KW-0479">Metal-binding</keyword>
<keyword id="KW-0547">Nucleotide-binding</keyword>
<keyword id="KW-1185">Reference proteome</keyword>
<keyword id="KW-0819">tRNA processing</keyword>
<dbReference type="EMBL" id="D88802">
    <property type="protein sequence ID" value="BAA19715.1"/>
    <property type="molecule type" value="Genomic_DNA"/>
</dbReference>
<dbReference type="EMBL" id="AL009126">
    <property type="protein sequence ID" value="CAB12410.1"/>
    <property type="molecule type" value="Genomic_DNA"/>
</dbReference>
<dbReference type="PIR" id="C69786">
    <property type="entry name" value="C69786"/>
</dbReference>
<dbReference type="RefSeq" id="NP_388472.1">
    <property type="nucleotide sequence ID" value="NC_000964.3"/>
</dbReference>
<dbReference type="RefSeq" id="WP_003234079.1">
    <property type="nucleotide sequence ID" value="NZ_OZ025638.1"/>
</dbReference>
<dbReference type="PDB" id="5MVR">
    <property type="method" value="X-ray"/>
    <property type="resolution" value="1.76 A"/>
    <property type="chains" value="A=2-158"/>
</dbReference>
<dbReference type="PDB" id="5NP9">
    <property type="method" value="X-ray"/>
    <property type="resolution" value="2.00 A"/>
    <property type="chains" value="A=1-158"/>
</dbReference>
<dbReference type="PDBsum" id="5MVR"/>
<dbReference type="PDBsum" id="5NP9"/>
<dbReference type="SMR" id="O05515"/>
<dbReference type="FunCoup" id="O05515">
    <property type="interactions" value="596"/>
</dbReference>
<dbReference type="STRING" id="224308.BSU05910"/>
<dbReference type="PaxDb" id="224308-BSU05910"/>
<dbReference type="EnsemblBacteria" id="CAB12410">
    <property type="protein sequence ID" value="CAB12410"/>
    <property type="gene ID" value="BSU_05910"/>
</dbReference>
<dbReference type="GeneID" id="938047"/>
<dbReference type="KEGG" id="bsu:BSU05910"/>
<dbReference type="PATRIC" id="fig|224308.179.peg.636"/>
<dbReference type="eggNOG" id="COG0802">
    <property type="taxonomic scope" value="Bacteria"/>
</dbReference>
<dbReference type="InParanoid" id="O05515"/>
<dbReference type="OrthoDB" id="9815896at2"/>
<dbReference type="PhylomeDB" id="O05515"/>
<dbReference type="BioCyc" id="BSUB:BSU05910-MONOMER"/>
<dbReference type="Proteomes" id="UP000001570">
    <property type="component" value="Chromosome"/>
</dbReference>
<dbReference type="GO" id="GO:0005737">
    <property type="term" value="C:cytoplasm"/>
    <property type="evidence" value="ECO:0007669"/>
    <property type="project" value="UniProtKB-SubCell"/>
</dbReference>
<dbReference type="GO" id="GO:0005524">
    <property type="term" value="F:ATP binding"/>
    <property type="evidence" value="ECO:0007669"/>
    <property type="project" value="UniProtKB-KW"/>
</dbReference>
<dbReference type="GO" id="GO:0046872">
    <property type="term" value="F:metal ion binding"/>
    <property type="evidence" value="ECO:0007669"/>
    <property type="project" value="UniProtKB-KW"/>
</dbReference>
<dbReference type="GO" id="GO:0002949">
    <property type="term" value="P:tRNA threonylcarbamoyladenosine modification"/>
    <property type="evidence" value="ECO:0000314"/>
    <property type="project" value="UniProtKB"/>
</dbReference>
<dbReference type="FunFam" id="3.40.50.300:FF:000777">
    <property type="entry name" value="tRNA (N6-adenosine(37)-N6)-threonylcarbamoyltransferase complex ATPase TsaE"/>
    <property type="match status" value="1"/>
</dbReference>
<dbReference type="Gene3D" id="3.40.50.300">
    <property type="entry name" value="P-loop containing nucleotide triphosphate hydrolases"/>
    <property type="match status" value="1"/>
</dbReference>
<dbReference type="InterPro" id="IPR027417">
    <property type="entry name" value="P-loop_NTPase"/>
</dbReference>
<dbReference type="InterPro" id="IPR003442">
    <property type="entry name" value="T6A_TsaE"/>
</dbReference>
<dbReference type="NCBIfam" id="TIGR00150">
    <property type="entry name" value="T6A_YjeE"/>
    <property type="match status" value="1"/>
</dbReference>
<dbReference type="PANTHER" id="PTHR33540">
    <property type="entry name" value="TRNA THREONYLCARBAMOYLADENOSINE BIOSYNTHESIS PROTEIN TSAE"/>
    <property type="match status" value="1"/>
</dbReference>
<dbReference type="PANTHER" id="PTHR33540:SF2">
    <property type="entry name" value="TRNA THREONYLCARBAMOYLADENOSINE BIOSYNTHESIS PROTEIN TSAE"/>
    <property type="match status" value="1"/>
</dbReference>
<dbReference type="Pfam" id="PF02367">
    <property type="entry name" value="TsaE"/>
    <property type="match status" value="1"/>
</dbReference>
<dbReference type="SUPFAM" id="SSF52540">
    <property type="entry name" value="P-loop containing nucleoside triphosphate hydrolases"/>
    <property type="match status" value="1"/>
</dbReference>
<evidence type="ECO:0000250" key="1"/>
<evidence type="ECO:0000269" key="2">
    <source>
    </source>
</evidence>
<evidence type="ECO:0000269" key="3">
    <source>
    </source>
</evidence>
<evidence type="ECO:0000305" key="4"/>
<evidence type="ECO:0000305" key="5">
    <source>
    </source>
</evidence>
<evidence type="ECO:0007829" key="6">
    <source>
        <dbReference type="PDB" id="5MVR"/>
    </source>
</evidence>
<evidence type="ECO:0007829" key="7">
    <source>
        <dbReference type="PDB" id="5NP9"/>
    </source>
</evidence>
<accession>O05515</accession>